<organism>
    <name type="scientific">Mus musculus</name>
    <name type="common">Mouse</name>
    <dbReference type="NCBI Taxonomy" id="10090"/>
    <lineage>
        <taxon>Eukaryota</taxon>
        <taxon>Metazoa</taxon>
        <taxon>Chordata</taxon>
        <taxon>Craniata</taxon>
        <taxon>Vertebrata</taxon>
        <taxon>Euteleostomi</taxon>
        <taxon>Mammalia</taxon>
        <taxon>Eutheria</taxon>
        <taxon>Euarchontoglires</taxon>
        <taxon>Glires</taxon>
        <taxon>Rodentia</taxon>
        <taxon>Myomorpha</taxon>
        <taxon>Muroidea</taxon>
        <taxon>Muridae</taxon>
        <taxon>Murinae</taxon>
        <taxon>Mus</taxon>
        <taxon>Mus</taxon>
    </lineage>
</organism>
<feature type="initiator methionine" description="Removed" evidence="8">
    <location>
        <position position="1"/>
    </location>
</feature>
<feature type="chain" id="PRO_0000239776" description="Phosphorylated adapter RNA export protein">
    <location>
        <begin position="2"/>
        <end position="385"/>
    </location>
</feature>
<feature type="region of interest" description="Disordered" evidence="4">
    <location>
        <begin position="1"/>
        <end position="28"/>
    </location>
</feature>
<feature type="region of interest" description="Necessary for interaction with CBP80">
    <location>
        <begin position="2"/>
        <end position="320"/>
    </location>
</feature>
<feature type="region of interest" description="Disordered" evidence="4">
    <location>
        <begin position="75"/>
        <end position="101"/>
    </location>
</feature>
<feature type="region of interest" description="Disordered" evidence="4">
    <location>
        <begin position="164"/>
        <end position="192"/>
    </location>
</feature>
<feature type="region of interest" description="Sufficient for poly U RNA-binding">
    <location>
        <begin position="219"/>
        <end position="319"/>
    </location>
</feature>
<feature type="region of interest" description="Necessary for poly U RNA-binding and snRNA export">
    <location>
        <begin position="270"/>
        <end position="278"/>
    </location>
</feature>
<feature type="region of interest" description="Disordered" evidence="4">
    <location>
        <begin position="335"/>
        <end position="385"/>
    </location>
</feature>
<feature type="short sequence motif" description="Nuclear localization signal">
    <location>
        <begin position="71"/>
        <end position="74"/>
    </location>
</feature>
<feature type="short sequence motif" description="Nuclear export signal">
    <location>
        <begin position="120"/>
        <end position="129"/>
    </location>
</feature>
<feature type="short sequence motif" description="Nuclear localization signal">
    <location>
        <begin position="189"/>
        <end position="192"/>
    </location>
</feature>
<feature type="compositionally biased region" description="Acidic residues" evidence="4">
    <location>
        <begin position="1"/>
        <end position="18"/>
    </location>
</feature>
<feature type="compositionally biased region" description="Basic and acidic residues" evidence="4">
    <location>
        <begin position="164"/>
        <end position="184"/>
    </location>
</feature>
<feature type="compositionally biased region" description="Polar residues" evidence="4">
    <location>
        <begin position="343"/>
        <end position="352"/>
    </location>
</feature>
<feature type="compositionally biased region" description="Basic and acidic residues" evidence="4">
    <location>
        <begin position="364"/>
        <end position="385"/>
    </location>
</feature>
<feature type="modified residue" description="N-acetylalanine" evidence="8">
    <location>
        <position position="2"/>
    </location>
</feature>
<feature type="modified residue" description="Phosphoserine" evidence="3">
    <location>
        <position position="14"/>
    </location>
</feature>
<feature type="modified residue" description="Phosphoserine" evidence="3">
    <location>
        <position position="16"/>
    </location>
</feature>
<feature type="modified residue" description="Phosphoserine" evidence="2">
    <location>
        <position position="56"/>
    </location>
</feature>
<feature type="modified residue" description="Phosphoserine" evidence="2">
    <location>
        <position position="57"/>
    </location>
</feature>
<feature type="modified residue" description="Phosphoserine" evidence="2">
    <location>
        <position position="60"/>
    </location>
</feature>
<feature type="modified residue" description="Phosphoserine" evidence="2">
    <location>
        <position position="63"/>
    </location>
</feature>
<feature type="modified residue" description="Phosphothreonine" evidence="3">
    <location>
        <position position="287"/>
    </location>
</feature>
<feature type="modified residue" description="Phosphoserine" evidence="3">
    <location>
        <position position="347"/>
    </location>
</feature>
<feature type="mutagenesis site" description="Strongly reduces its import in the nucleus. Abolishes its import in the nucleus, does not change its export to the cytoplasm and the export of U snRNA complex; when associated with 190-AA-191." evidence="6">
    <original>KRKR</original>
    <variation>ARAA</variation>
    <location>
        <begin position="71"/>
        <end position="74"/>
    </location>
</feature>
<feature type="mutagenesis site" description="Reduces U snRNA export. Strongly abolishes the U snRNA export complex formation. Does not abolish the pre-complex formation." evidence="5">
    <original>LGILGM</original>
    <variation>AGIAGA</variation>
    <location>
        <begin position="124"/>
        <end position="129"/>
    </location>
</feature>
<feature type="mutagenesis site" description="Strongly reduces its import in the nucleus. Abolishes its import in the nucleus, does not change its export to the cytoplasm and the export of the U snRNA complex; when associated with 71-ARAA-74." evidence="6">
    <original>RK</original>
    <variation>AA</variation>
    <location>
        <begin position="190"/>
        <end position="191"/>
    </location>
</feature>
<feature type="mutagenesis site" description="Does not inhibit U RNA-binding." evidence="6">
    <original>ETAE</original>
    <variation>AAAA</variation>
    <location>
        <begin position="255"/>
        <end position="258"/>
    </location>
</feature>
<feature type="mutagenesis site" description="Partially inhibits U RNA-binding." evidence="6">
    <original>EQN</original>
    <variation>AAA</variation>
    <location>
        <begin position="260"/>
        <end position="262"/>
    </location>
</feature>
<feature type="mutagenesis site" description="Strongly inhibits U RNA-binding." evidence="6">
    <original>GG</original>
    <variation>AA</variation>
    <location>
        <begin position="263"/>
        <end position="264"/>
    </location>
</feature>
<feature type="mutagenesis site" description="Partially inhibits U RNA-binding." evidence="6">
    <original>GS</original>
    <variation>AA</variation>
    <location>
        <begin position="270"/>
        <end position="271"/>
    </location>
</feature>
<feature type="mutagenesis site" description="Partially reduces its import in the nucleus." evidence="6">
    <original>RR</original>
    <variation>AA</variation>
    <location>
        <begin position="273"/>
        <end position="274"/>
    </location>
</feature>
<feature type="mutagenesis site" description="Partially inhibits U RNA-binding." evidence="6">
    <original>TP</original>
    <variation>AA</variation>
    <location>
        <begin position="275"/>
        <end position="276"/>
    </location>
</feature>
<feature type="mutagenesis site" description="Does not inhibit U RNA-binding." evidence="6">
    <original>SISEE</original>
    <variation>AIAEA</variation>
    <location>
        <begin position="289"/>
        <end position="293"/>
    </location>
</feature>
<feature type="mutagenesis site" description="Partially reduces its import in the nucleus." evidence="6">
    <original>KR</original>
    <variation>AA</variation>
    <location>
        <begin position="315"/>
        <end position="316"/>
    </location>
</feature>
<feature type="sequence conflict" description="In Ref. 2; BAC27117." evidence="7" ref="2">
    <original>L</original>
    <variation>Q</variation>
    <location>
        <position position="236"/>
    </location>
</feature>
<comment type="function">
    <text evidence="1 5 6">A phosphoprotein adapter involved in the XPO1-mediated U snRNA export from the nucleus. Bridge components required for U snRNA export, the cap binding complex (CBC)-bound snRNA on the one hand and the GTPase Ran in its active GTP-bound form together with the export receptor XPO1 on the other. Its phosphorylation in the nucleus is required for U snRNA export complex assembly and export, while its dephosphorylation in the cytoplasm causes export complex disassembly. It is recycled back to the nucleus via the importin alpha/beta heterodimeric import receptor. The directionality of nuclear export is thought to be conferred by an asymmetric distribution of the GTP- and GDP-bound forms of Ran between the cytoplasm and nucleus. Its compartmentalized phosphorylation cycle may also contribute to the directionality of export. Binds strongly to m7G-capped U1 and U5 small nuclear RNAs (snRNAs) in a sequence-unspecific manner and phosphorylation-independent manner. Also plays a role in the biogenesis of U3 small nucleolar RNA (snoRNA). Involved in the U3 snoRNA transport from nucleoplasm to Cajal bodies. Binds strongly to m7G-capped U3, U8 and U13 precursor snoRNAs and weakly to trimethylated (TMG)-capped U3, U8 and U13 snoRNAs. Also binds to telomerase RNA (By similarity).</text>
</comment>
<comment type="subunit">
    <text evidence="3 5 6">Found in a U snRNA export complex with PHAX/RNUXA, NCBP1/CBP80, NCBP2/CBP20, RAN, XPO1 and m7G-capped RNA. Part of a precomplex with PHAX/RNUXA, NCBP1/CBP80, NCBP2/CBP20 and m7G-capped RNA. Interacts with NCBP1/CBP80. Found in a complex with snoRNA. Interacts with NCBP2/CBP20 (By similarity). Interacts with DDX39A; this interaction stimulates PHAX RNA binding activity (By similarity).</text>
</comment>
<comment type="subcellular location">
    <subcellularLocation>
        <location evidence="3">Nucleus</location>
    </subcellularLocation>
    <subcellularLocation>
        <location evidence="3">Nucleus</location>
        <location evidence="3">Nucleoplasm</location>
    </subcellularLocation>
    <subcellularLocation>
        <location evidence="3">Nucleus</location>
        <location evidence="3">Cajal body</location>
    </subcellularLocation>
    <subcellularLocation>
        <location evidence="5">Cytoplasm</location>
    </subcellularLocation>
    <text evidence="3">Shuttles between the nucleus and the cytoplasm. Shuttles between the nucleoplasm and Cajal bodies.</text>
</comment>
<comment type="PTM">
    <text evidence="5">Phosphorylated in the nucleus. Dephosphorylated in the cytoplasm.</text>
</comment>
<comment type="similarity">
    <text evidence="7">Belongs to the PHAX family.</text>
</comment>
<evidence type="ECO:0000250" key="1"/>
<evidence type="ECO:0000250" key="2">
    <source>
        <dbReference type="UniProtKB" id="Q63068"/>
    </source>
</evidence>
<evidence type="ECO:0000250" key="3">
    <source>
        <dbReference type="UniProtKB" id="Q9H814"/>
    </source>
</evidence>
<evidence type="ECO:0000256" key="4">
    <source>
        <dbReference type="SAM" id="MobiDB-lite"/>
    </source>
</evidence>
<evidence type="ECO:0000269" key="5">
    <source>
    </source>
</evidence>
<evidence type="ECO:0000269" key="6">
    <source>
    </source>
</evidence>
<evidence type="ECO:0000305" key="7"/>
<evidence type="ECO:0007744" key="8">
    <source>
    </source>
</evidence>
<dbReference type="EMBL" id="AJ276504">
    <property type="protein sequence ID" value="CAB87994.1"/>
    <property type="molecule type" value="mRNA"/>
</dbReference>
<dbReference type="EMBL" id="AK030749">
    <property type="protein sequence ID" value="BAC27117.1"/>
    <property type="molecule type" value="mRNA"/>
</dbReference>
<dbReference type="EMBL" id="BC049590">
    <property type="protein sequence ID" value="AAH49590.1"/>
    <property type="molecule type" value="mRNA"/>
</dbReference>
<dbReference type="EMBL" id="BC061110">
    <property type="protein sequence ID" value="AAH61110.1"/>
    <property type="molecule type" value="mRNA"/>
</dbReference>
<dbReference type="CCDS" id="CCDS29259.1"/>
<dbReference type="RefSeq" id="NP_001156461.1">
    <property type="nucleotide sequence ID" value="NM_001162989.1"/>
</dbReference>
<dbReference type="RefSeq" id="NP_064380.3">
    <property type="nucleotide sequence ID" value="NM_019996.4"/>
</dbReference>
<dbReference type="SMR" id="Q9JJT9"/>
<dbReference type="BioGRID" id="208128">
    <property type="interactions" value="9"/>
</dbReference>
<dbReference type="FunCoup" id="Q9JJT9">
    <property type="interactions" value="2741"/>
</dbReference>
<dbReference type="STRING" id="10090.ENSMUSP00000008445"/>
<dbReference type="iPTMnet" id="Q9JJT9"/>
<dbReference type="PhosphoSitePlus" id="Q9JJT9"/>
<dbReference type="jPOST" id="Q9JJT9"/>
<dbReference type="PaxDb" id="10090-ENSMUSP00000008445"/>
<dbReference type="ProteomicsDB" id="287696"/>
<dbReference type="Pumba" id="Q9JJT9"/>
<dbReference type="Antibodypedia" id="45036">
    <property type="antibodies" value="196 antibodies from 27 providers"/>
</dbReference>
<dbReference type="DNASU" id="56698"/>
<dbReference type="Ensembl" id="ENSMUST00000008445.7">
    <property type="protein sequence ID" value="ENSMUSP00000008445.6"/>
    <property type="gene ID" value="ENSMUSG00000008301.12"/>
</dbReference>
<dbReference type="GeneID" id="56698"/>
<dbReference type="KEGG" id="mmu:56698"/>
<dbReference type="UCSC" id="uc008eyq.2">
    <property type="organism name" value="mouse"/>
</dbReference>
<dbReference type="AGR" id="MGI:1891839"/>
<dbReference type="CTD" id="51808"/>
<dbReference type="MGI" id="MGI:1891839">
    <property type="gene designation" value="Phax"/>
</dbReference>
<dbReference type="VEuPathDB" id="HostDB:ENSMUSG00000008301"/>
<dbReference type="eggNOG" id="KOG3948">
    <property type="taxonomic scope" value="Eukaryota"/>
</dbReference>
<dbReference type="GeneTree" id="ENSGT00390000011084"/>
<dbReference type="HOGENOM" id="CLU_058840_1_0_1"/>
<dbReference type="InParanoid" id="Q9JJT9"/>
<dbReference type="OMA" id="EEGCIKK"/>
<dbReference type="OrthoDB" id="20573at2759"/>
<dbReference type="PhylomeDB" id="Q9JJT9"/>
<dbReference type="TreeFam" id="TF321050"/>
<dbReference type="Reactome" id="R-MMU-6807505">
    <property type="pathway name" value="RNA polymerase II transcribes snRNA genes"/>
</dbReference>
<dbReference type="BioGRID-ORCS" id="56698">
    <property type="hits" value="21 hits in 77 CRISPR screens"/>
</dbReference>
<dbReference type="PRO" id="PR:Q9JJT9"/>
<dbReference type="Proteomes" id="UP000000589">
    <property type="component" value="Chromosome 18"/>
</dbReference>
<dbReference type="RNAct" id="Q9JJT9">
    <property type="molecule type" value="protein"/>
</dbReference>
<dbReference type="Bgee" id="ENSMUSG00000008301">
    <property type="expression patterns" value="Expressed in otic placode and 256 other cell types or tissues"/>
</dbReference>
<dbReference type="ExpressionAtlas" id="Q9JJT9">
    <property type="expression patterns" value="baseline and differential"/>
</dbReference>
<dbReference type="GO" id="GO:0015030">
    <property type="term" value="C:Cajal body"/>
    <property type="evidence" value="ECO:0007669"/>
    <property type="project" value="UniProtKB-SubCell"/>
</dbReference>
<dbReference type="GO" id="GO:0005737">
    <property type="term" value="C:cytoplasm"/>
    <property type="evidence" value="ECO:0000314"/>
    <property type="project" value="MGI"/>
</dbReference>
<dbReference type="GO" id="GO:0043025">
    <property type="term" value="C:neuronal cell body"/>
    <property type="evidence" value="ECO:0007669"/>
    <property type="project" value="Ensembl"/>
</dbReference>
<dbReference type="GO" id="GO:0005634">
    <property type="term" value="C:nucleus"/>
    <property type="evidence" value="ECO:0000314"/>
    <property type="project" value="MGI"/>
</dbReference>
<dbReference type="GO" id="GO:1990904">
    <property type="term" value="C:ribonucleoprotein complex"/>
    <property type="evidence" value="ECO:0007669"/>
    <property type="project" value="Ensembl"/>
</dbReference>
<dbReference type="GO" id="GO:0140262">
    <property type="term" value="F:mRNA cap binding complex binding"/>
    <property type="evidence" value="ECO:0007669"/>
    <property type="project" value="Ensembl"/>
</dbReference>
<dbReference type="GO" id="GO:0003723">
    <property type="term" value="F:RNA binding"/>
    <property type="evidence" value="ECO:0007669"/>
    <property type="project" value="UniProtKB-KW"/>
</dbReference>
<dbReference type="GO" id="GO:0015643">
    <property type="term" value="F:toxic substance binding"/>
    <property type="evidence" value="ECO:0007669"/>
    <property type="project" value="Ensembl"/>
</dbReference>
<dbReference type="GO" id="GO:0015031">
    <property type="term" value="P:protein transport"/>
    <property type="evidence" value="ECO:0007669"/>
    <property type="project" value="UniProtKB-KW"/>
</dbReference>
<dbReference type="GO" id="GO:0043489">
    <property type="term" value="P:RNA stabilization"/>
    <property type="evidence" value="ECO:0007669"/>
    <property type="project" value="Ensembl"/>
</dbReference>
<dbReference type="GO" id="GO:0006408">
    <property type="term" value="P:snRNA export from nucleus"/>
    <property type="evidence" value="ECO:0000314"/>
    <property type="project" value="MGI"/>
</dbReference>
<dbReference type="FunFam" id="1.10.10.1440:FF:000001">
    <property type="entry name" value="phosphorylated adapter RNA export protein-like"/>
    <property type="match status" value="1"/>
</dbReference>
<dbReference type="Gene3D" id="1.10.10.1440">
    <property type="entry name" value="PHAX RNA-binding domain"/>
    <property type="match status" value="1"/>
</dbReference>
<dbReference type="InterPro" id="IPR039047">
    <property type="entry name" value="PHAX"/>
</dbReference>
<dbReference type="InterPro" id="IPR019385">
    <property type="entry name" value="PHAX_RNA-binding_domain"/>
</dbReference>
<dbReference type="InterPro" id="IPR038092">
    <property type="entry name" value="PHAX_RNA-binding_sf"/>
</dbReference>
<dbReference type="PANTHER" id="PTHR13135">
    <property type="entry name" value="CYTOSOLIC RESINIFERATOXIN BINDING PROTEIN RBP-26"/>
    <property type="match status" value="1"/>
</dbReference>
<dbReference type="PANTHER" id="PTHR13135:SF0">
    <property type="entry name" value="PHOSPHORYLATED ADAPTER RNA EXPORT PROTEIN"/>
    <property type="match status" value="1"/>
</dbReference>
<dbReference type="Pfam" id="PF10258">
    <property type="entry name" value="PHAX_RNA-bd"/>
    <property type="match status" value="1"/>
</dbReference>
<protein>
    <recommendedName>
        <fullName>Phosphorylated adapter RNA export protein</fullName>
    </recommendedName>
    <alternativeName>
        <fullName>RNA U small nuclear RNA export adapter protein</fullName>
    </alternativeName>
</protein>
<keyword id="KW-0007">Acetylation</keyword>
<keyword id="KW-0963">Cytoplasm</keyword>
<keyword id="KW-0539">Nucleus</keyword>
<keyword id="KW-0597">Phosphoprotein</keyword>
<keyword id="KW-0653">Protein transport</keyword>
<keyword id="KW-1185">Reference proteome</keyword>
<keyword id="KW-0694">RNA-binding</keyword>
<keyword id="KW-0813">Transport</keyword>
<proteinExistence type="evidence at protein level"/>
<sequence>MALEAGDMEEGQLSDSDSDMTVVPSDRPLQMAKVLGGGSAACAPVSHYRTVKHVDSSEESLDSDDDCSLWKRKRQKCHNTPPKPEPFPFGPSGQKTALNGGKKVNNIWGAVLQEQNQDAVATELGILGMEGSIDRSRQSETYNYLLAKKLAKKESQEYTKELDKDLDEYMHGDKKPGSKEDENGQGHLKRKRPVRDRLGNRVEMNYKGRYEITEEDAPEKVADEIAFRLQEPKKDLIARVVRILGNKKAIELLMETAEVEQNGGLFIMNGSRRRTPGGVFLNLLKNTPSISEEQIKDIFYVENQKEYENKKAARKRRTQLLGKKMKQAIKSLNFQEDDDTSRETFASDTNEALASLDEAQEGPGETKLDAEEAIEVDHPQDLDIF</sequence>
<gene>
    <name type="primary">Phax</name>
    <name type="synonym">Rnuxa</name>
</gene>
<name>PHAX_MOUSE</name>
<accession>Q9JJT9</accession>
<accession>Q8BSR8</accession>
<reference key="1">
    <citation type="journal article" date="2000" name="Cell">
        <title>PHAX, a mediator of U snRNA nuclear export whose activity is regulated by phosphorylation.</title>
        <authorList>
            <person name="Ohno M."/>
            <person name="Segref A."/>
            <person name="Bachi A."/>
            <person name="Wilm M."/>
            <person name="Mattaj I.W."/>
        </authorList>
    </citation>
    <scope>NUCLEOTIDE SEQUENCE [MRNA]</scope>
    <scope>FUNCTION IN U SNRNA EXPORT</scope>
    <scope>IDENTIFICATION IN A U SNRNA EXPORT COMPLEX WITH NCBP1; NCBP2; RAN; XPO1 AND M7G-CAPPED RNA</scope>
    <scope>PHOSPHORYLATION</scope>
    <scope>MUTAGENESIS OF 124-LEU--MET-129</scope>
    <scope>RNA-BINDING</scope>
    <scope>SUBCELLULAR LOCATION</scope>
</reference>
<reference key="2">
    <citation type="journal article" date="2005" name="Science">
        <title>The transcriptional landscape of the mammalian genome.</title>
        <authorList>
            <person name="Carninci P."/>
            <person name="Kasukawa T."/>
            <person name="Katayama S."/>
            <person name="Gough J."/>
            <person name="Frith M.C."/>
            <person name="Maeda N."/>
            <person name="Oyama R."/>
            <person name="Ravasi T."/>
            <person name="Lenhard B."/>
            <person name="Wells C."/>
            <person name="Kodzius R."/>
            <person name="Shimokawa K."/>
            <person name="Bajic V.B."/>
            <person name="Brenner S.E."/>
            <person name="Batalov S."/>
            <person name="Forrest A.R."/>
            <person name="Zavolan M."/>
            <person name="Davis M.J."/>
            <person name="Wilming L.G."/>
            <person name="Aidinis V."/>
            <person name="Allen J.E."/>
            <person name="Ambesi-Impiombato A."/>
            <person name="Apweiler R."/>
            <person name="Aturaliya R.N."/>
            <person name="Bailey T.L."/>
            <person name="Bansal M."/>
            <person name="Baxter L."/>
            <person name="Beisel K.W."/>
            <person name="Bersano T."/>
            <person name="Bono H."/>
            <person name="Chalk A.M."/>
            <person name="Chiu K.P."/>
            <person name="Choudhary V."/>
            <person name="Christoffels A."/>
            <person name="Clutterbuck D.R."/>
            <person name="Crowe M.L."/>
            <person name="Dalla E."/>
            <person name="Dalrymple B.P."/>
            <person name="de Bono B."/>
            <person name="Della Gatta G."/>
            <person name="di Bernardo D."/>
            <person name="Down T."/>
            <person name="Engstrom P."/>
            <person name="Fagiolini M."/>
            <person name="Faulkner G."/>
            <person name="Fletcher C.F."/>
            <person name="Fukushima T."/>
            <person name="Furuno M."/>
            <person name="Futaki S."/>
            <person name="Gariboldi M."/>
            <person name="Georgii-Hemming P."/>
            <person name="Gingeras T.R."/>
            <person name="Gojobori T."/>
            <person name="Green R.E."/>
            <person name="Gustincich S."/>
            <person name="Harbers M."/>
            <person name="Hayashi Y."/>
            <person name="Hensch T.K."/>
            <person name="Hirokawa N."/>
            <person name="Hill D."/>
            <person name="Huminiecki L."/>
            <person name="Iacono M."/>
            <person name="Ikeo K."/>
            <person name="Iwama A."/>
            <person name="Ishikawa T."/>
            <person name="Jakt M."/>
            <person name="Kanapin A."/>
            <person name="Katoh M."/>
            <person name="Kawasawa Y."/>
            <person name="Kelso J."/>
            <person name="Kitamura H."/>
            <person name="Kitano H."/>
            <person name="Kollias G."/>
            <person name="Krishnan S.P."/>
            <person name="Kruger A."/>
            <person name="Kummerfeld S.K."/>
            <person name="Kurochkin I.V."/>
            <person name="Lareau L.F."/>
            <person name="Lazarevic D."/>
            <person name="Lipovich L."/>
            <person name="Liu J."/>
            <person name="Liuni S."/>
            <person name="McWilliam S."/>
            <person name="Madan Babu M."/>
            <person name="Madera M."/>
            <person name="Marchionni L."/>
            <person name="Matsuda H."/>
            <person name="Matsuzawa S."/>
            <person name="Miki H."/>
            <person name="Mignone F."/>
            <person name="Miyake S."/>
            <person name="Morris K."/>
            <person name="Mottagui-Tabar S."/>
            <person name="Mulder N."/>
            <person name="Nakano N."/>
            <person name="Nakauchi H."/>
            <person name="Ng P."/>
            <person name="Nilsson R."/>
            <person name="Nishiguchi S."/>
            <person name="Nishikawa S."/>
            <person name="Nori F."/>
            <person name="Ohara O."/>
            <person name="Okazaki Y."/>
            <person name="Orlando V."/>
            <person name="Pang K.C."/>
            <person name="Pavan W.J."/>
            <person name="Pavesi G."/>
            <person name="Pesole G."/>
            <person name="Petrovsky N."/>
            <person name="Piazza S."/>
            <person name="Reed J."/>
            <person name="Reid J.F."/>
            <person name="Ring B.Z."/>
            <person name="Ringwald M."/>
            <person name="Rost B."/>
            <person name="Ruan Y."/>
            <person name="Salzberg S.L."/>
            <person name="Sandelin A."/>
            <person name="Schneider C."/>
            <person name="Schoenbach C."/>
            <person name="Sekiguchi K."/>
            <person name="Semple C.A."/>
            <person name="Seno S."/>
            <person name="Sessa L."/>
            <person name="Sheng Y."/>
            <person name="Shibata Y."/>
            <person name="Shimada H."/>
            <person name="Shimada K."/>
            <person name="Silva D."/>
            <person name="Sinclair B."/>
            <person name="Sperling S."/>
            <person name="Stupka E."/>
            <person name="Sugiura K."/>
            <person name="Sultana R."/>
            <person name="Takenaka Y."/>
            <person name="Taki K."/>
            <person name="Tammoja K."/>
            <person name="Tan S.L."/>
            <person name="Tang S."/>
            <person name="Taylor M.S."/>
            <person name="Tegner J."/>
            <person name="Teichmann S.A."/>
            <person name="Ueda H.R."/>
            <person name="van Nimwegen E."/>
            <person name="Verardo R."/>
            <person name="Wei C.L."/>
            <person name="Yagi K."/>
            <person name="Yamanishi H."/>
            <person name="Zabarovsky E."/>
            <person name="Zhu S."/>
            <person name="Zimmer A."/>
            <person name="Hide W."/>
            <person name="Bult C."/>
            <person name="Grimmond S.M."/>
            <person name="Teasdale R.D."/>
            <person name="Liu E.T."/>
            <person name="Brusic V."/>
            <person name="Quackenbush J."/>
            <person name="Wahlestedt C."/>
            <person name="Mattick J.S."/>
            <person name="Hume D.A."/>
            <person name="Kai C."/>
            <person name="Sasaki D."/>
            <person name="Tomaru Y."/>
            <person name="Fukuda S."/>
            <person name="Kanamori-Katayama M."/>
            <person name="Suzuki M."/>
            <person name="Aoki J."/>
            <person name="Arakawa T."/>
            <person name="Iida J."/>
            <person name="Imamura K."/>
            <person name="Itoh M."/>
            <person name="Kato T."/>
            <person name="Kawaji H."/>
            <person name="Kawagashira N."/>
            <person name="Kawashima T."/>
            <person name="Kojima M."/>
            <person name="Kondo S."/>
            <person name="Konno H."/>
            <person name="Nakano K."/>
            <person name="Ninomiya N."/>
            <person name="Nishio T."/>
            <person name="Okada M."/>
            <person name="Plessy C."/>
            <person name="Shibata K."/>
            <person name="Shiraki T."/>
            <person name="Suzuki S."/>
            <person name="Tagami M."/>
            <person name="Waki K."/>
            <person name="Watahiki A."/>
            <person name="Okamura-Oho Y."/>
            <person name="Suzuki H."/>
            <person name="Kawai J."/>
            <person name="Hayashizaki Y."/>
        </authorList>
    </citation>
    <scope>NUCLEOTIDE SEQUENCE [LARGE SCALE MRNA]</scope>
    <source>
        <strain>C57BL/6J</strain>
        <tissue>Embryo</tissue>
    </source>
</reference>
<reference key="3">
    <citation type="journal article" date="2004" name="Genome Res.">
        <title>The status, quality, and expansion of the NIH full-length cDNA project: the Mammalian Gene Collection (MGC).</title>
        <authorList>
            <consortium name="The MGC Project Team"/>
        </authorList>
    </citation>
    <scope>NUCLEOTIDE SEQUENCE [LARGE SCALE MRNA]</scope>
    <source>
        <tissue>Brain</tissue>
        <tissue>Kidney</tissue>
    </source>
</reference>
<reference key="4">
    <citation type="journal article" date="2001" name="RNA">
        <title>The evolutionarily conserved region of the U snRNA export mediator PHAX is a novel RNA-binding domain that is essential for U snRNA export.</title>
        <authorList>
            <person name="Segref A."/>
            <person name="Mattaj I.W."/>
            <person name="Ohno M."/>
        </authorList>
    </citation>
    <scope>FUNCTION IN U SNRNA EXPORT</scope>
    <scope>INTERACTION WITH NCBP1</scope>
    <scope>RNA-BINDING</scope>
    <scope>MUTAGENESIS OF 71-LYS--ARG-74; 190-ARG-LYS-191; 255-GLU--GLU-258; 260-GLU--ASN-262; 263-GLY-GLY-264; 270-GLY-SER-271; 273-ARG-ARG-274; 275-THR-PRO-276; 289-SER--GLU-293 AND 315-LYS-ARG-316</scope>
</reference>
<reference key="5">
    <citation type="journal article" date="2004" name="Mol. Cell. Proteomics">
        <title>Phosphoproteomic analysis of the developing mouse brain.</title>
        <authorList>
            <person name="Ballif B.A."/>
            <person name="Villen J."/>
            <person name="Beausoleil S.A."/>
            <person name="Schwartz D."/>
            <person name="Gygi S.P."/>
        </authorList>
    </citation>
    <scope>IDENTIFICATION BY MASS SPECTROMETRY [LARGE SCALE ANALYSIS]</scope>
    <source>
        <tissue>Embryonic brain</tissue>
    </source>
</reference>
<reference key="6">
    <citation type="journal article" date="2007" name="Proc. Natl. Acad. Sci. U.S.A.">
        <title>Large-scale phosphorylation analysis of mouse liver.</title>
        <authorList>
            <person name="Villen J."/>
            <person name="Beausoleil S.A."/>
            <person name="Gerber S.A."/>
            <person name="Gygi S.P."/>
        </authorList>
    </citation>
    <scope>ACETYLATION [LARGE SCALE ANALYSIS] AT ALA-2</scope>
    <scope>CLEAVAGE OF INITIATOR METHIONINE [LARGE SCALE ANALYSIS]</scope>
    <scope>IDENTIFICATION BY MASS SPECTROMETRY [LARGE SCALE ANALYSIS]</scope>
    <source>
        <tissue>Liver</tissue>
    </source>
</reference>
<reference key="7">
    <citation type="journal article" date="2010" name="Cell">
        <title>A tissue-specific atlas of mouse protein phosphorylation and expression.</title>
        <authorList>
            <person name="Huttlin E.L."/>
            <person name="Jedrychowski M.P."/>
            <person name="Elias J.E."/>
            <person name="Goswami T."/>
            <person name="Rad R."/>
            <person name="Beausoleil S.A."/>
            <person name="Villen J."/>
            <person name="Haas W."/>
            <person name="Sowa M.E."/>
            <person name="Gygi S.P."/>
        </authorList>
    </citation>
    <scope>IDENTIFICATION BY MASS SPECTROMETRY [LARGE SCALE ANALYSIS]</scope>
    <source>
        <tissue>Spleen</tissue>
    </source>
</reference>